<gene>
    <name evidence="1" type="primary">argD</name>
    <name type="ordered locus">WS0302</name>
</gene>
<comment type="catalytic activity">
    <reaction evidence="1">
        <text>N(2)-acetyl-L-ornithine + 2-oxoglutarate = N-acetyl-L-glutamate 5-semialdehyde + L-glutamate</text>
        <dbReference type="Rhea" id="RHEA:18049"/>
        <dbReference type="ChEBI" id="CHEBI:16810"/>
        <dbReference type="ChEBI" id="CHEBI:29123"/>
        <dbReference type="ChEBI" id="CHEBI:29985"/>
        <dbReference type="ChEBI" id="CHEBI:57805"/>
        <dbReference type="EC" id="2.6.1.11"/>
    </reaction>
</comment>
<comment type="cofactor">
    <cofactor evidence="1">
        <name>pyridoxal 5'-phosphate</name>
        <dbReference type="ChEBI" id="CHEBI:597326"/>
    </cofactor>
    <text evidence="1">Binds 1 pyridoxal phosphate per subunit.</text>
</comment>
<comment type="pathway">
    <text evidence="1">Amino-acid biosynthesis; L-arginine biosynthesis; N(2)-acetyl-L-ornithine from L-glutamate: step 4/4.</text>
</comment>
<comment type="subunit">
    <text evidence="1">Homodimer.</text>
</comment>
<comment type="subcellular location">
    <subcellularLocation>
        <location evidence="1">Cytoplasm</location>
    </subcellularLocation>
</comment>
<comment type="miscellaneous">
    <text evidence="1">May also have succinyldiaminopimelate aminotransferase activity, thus carrying out the corresponding step in lysine biosynthesis.</text>
</comment>
<comment type="similarity">
    <text evidence="1">Belongs to the class-III pyridoxal-phosphate-dependent aminotransferase family. ArgD subfamily.</text>
</comment>
<comment type="sequence caution" evidence="2">
    <conflict type="erroneous initiation">
        <sequence resource="EMBL-CDS" id="CAE09453"/>
    </conflict>
</comment>
<evidence type="ECO:0000255" key="1">
    <source>
        <dbReference type="HAMAP-Rule" id="MF_01107"/>
    </source>
</evidence>
<evidence type="ECO:0000305" key="2"/>
<accession>Q7MAE6</accession>
<dbReference type="EC" id="2.6.1.11" evidence="1"/>
<dbReference type="EMBL" id="BX571657">
    <property type="protein sequence ID" value="CAE09453.1"/>
    <property type="status" value="ALT_INIT"/>
    <property type="molecule type" value="Genomic_DNA"/>
</dbReference>
<dbReference type="SMR" id="Q7MAE6"/>
<dbReference type="STRING" id="273121.WS0302"/>
<dbReference type="KEGG" id="wsu:WS0302"/>
<dbReference type="eggNOG" id="COG4992">
    <property type="taxonomic scope" value="Bacteria"/>
</dbReference>
<dbReference type="HOGENOM" id="CLU_016922_10_1_7"/>
<dbReference type="UniPathway" id="UPA00068">
    <property type="reaction ID" value="UER00109"/>
</dbReference>
<dbReference type="Proteomes" id="UP000000422">
    <property type="component" value="Chromosome"/>
</dbReference>
<dbReference type="GO" id="GO:0005737">
    <property type="term" value="C:cytoplasm"/>
    <property type="evidence" value="ECO:0007669"/>
    <property type="project" value="UniProtKB-SubCell"/>
</dbReference>
<dbReference type="GO" id="GO:0042802">
    <property type="term" value="F:identical protein binding"/>
    <property type="evidence" value="ECO:0007669"/>
    <property type="project" value="TreeGrafter"/>
</dbReference>
<dbReference type="GO" id="GO:0003992">
    <property type="term" value="F:N2-acetyl-L-ornithine:2-oxoglutarate 5-aminotransferase activity"/>
    <property type="evidence" value="ECO:0007669"/>
    <property type="project" value="UniProtKB-UniRule"/>
</dbReference>
<dbReference type="GO" id="GO:0030170">
    <property type="term" value="F:pyridoxal phosphate binding"/>
    <property type="evidence" value="ECO:0007669"/>
    <property type="project" value="InterPro"/>
</dbReference>
<dbReference type="GO" id="GO:0006526">
    <property type="term" value="P:L-arginine biosynthetic process"/>
    <property type="evidence" value="ECO:0007669"/>
    <property type="project" value="UniProtKB-UniRule"/>
</dbReference>
<dbReference type="CDD" id="cd00610">
    <property type="entry name" value="OAT_like"/>
    <property type="match status" value="1"/>
</dbReference>
<dbReference type="FunFam" id="3.40.640.10:FF:000004">
    <property type="entry name" value="Acetylornithine aminotransferase"/>
    <property type="match status" value="1"/>
</dbReference>
<dbReference type="Gene3D" id="3.90.1150.10">
    <property type="entry name" value="Aspartate Aminotransferase, domain 1"/>
    <property type="match status" value="1"/>
</dbReference>
<dbReference type="Gene3D" id="3.40.640.10">
    <property type="entry name" value="Type I PLP-dependent aspartate aminotransferase-like (Major domain)"/>
    <property type="match status" value="1"/>
</dbReference>
<dbReference type="HAMAP" id="MF_01107">
    <property type="entry name" value="ArgD_aminotrans_3"/>
    <property type="match status" value="1"/>
</dbReference>
<dbReference type="InterPro" id="IPR004636">
    <property type="entry name" value="AcOrn/SuccOrn_fam"/>
</dbReference>
<dbReference type="InterPro" id="IPR005814">
    <property type="entry name" value="Aminotrans_3"/>
</dbReference>
<dbReference type="InterPro" id="IPR049704">
    <property type="entry name" value="Aminotrans_3_PPA_site"/>
</dbReference>
<dbReference type="InterPro" id="IPR050103">
    <property type="entry name" value="Class-III_PLP-dep_AT"/>
</dbReference>
<dbReference type="InterPro" id="IPR015424">
    <property type="entry name" value="PyrdxlP-dep_Trfase"/>
</dbReference>
<dbReference type="InterPro" id="IPR015421">
    <property type="entry name" value="PyrdxlP-dep_Trfase_major"/>
</dbReference>
<dbReference type="InterPro" id="IPR015422">
    <property type="entry name" value="PyrdxlP-dep_Trfase_small"/>
</dbReference>
<dbReference type="NCBIfam" id="NF002325">
    <property type="entry name" value="PRK01278.1"/>
    <property type="match status" value="1"/>
</dbReference>
<dbReference type="PANTHER" id="PTHR11986:SF79">
    <property type="entry name" value="ACETYLORNITHINE AMINOTRANSFERASE, MITOCHONDRIAL"/>
    <property type="match status" value="1"/>
</dbReference>
<dbReference type="PANTHER" id="PTHR11986">
    <property type="entry name" value="AMINOTRANSFERASE CLASS III"/>
    <property type="match status" value="1"/>
</dbReference>
<dbReference type="Pfam" id="PF00202">
    <property type="entry name" value="Aminotran_3"/>
    <property type="match status" value="1"/>
</dbReference>
<dbReference type="PIRSF" id="PIRSF000521">
    <property type="entry name" value="Transaminase_4ab_Lys_Orn"/>
    <property type="match status" value="1"/>
</dbReference>
<dbReference type="SUPFAM" id="SSF53383">
    <property type="entry name" value="PLP-dependent transferases"/>
    <property type="match status" value="1"/>
</dbReference>
<dbReference type="PROSITE" id="PS00600">
    <property type="entry name" value="AA_TRANSFER_CLASS_3"/>
    <property type="match status" value="1"/>
</dbReference>
<sequence length="393" mass="43448">MGEALDKEYVLHSYGRNYVQFTQGKNATLWDSEGKDYIDFASGIAVCSVGHGNERLAGAICDQAKKLIHTSNLYYIEPQARLAEKLVKLSGYDMRVFFANSGAEANEGAIKIARKFGESHEGEVKRYKIITLESSFHGRTITALKATGQEKMHHYFGPYPDGFVYAKNLDHVFKLVDEKTCAVLLELVQGEGGIEPQDREGIKKLERFLKERGVLLMVDEVQTGIYRSGELFASQAYGIVPDVITVAKGLAGGVPIGAVMTTLKDIFAPGDHGSTFGGNFLSTRAGLEVLSILESLYQEGTLQKSIDRFSAELRALCVEFPSLFECEVGLGLMRGIRAKSAEIQKSVIDEAFKKRVLVLRSGRNTVRFLPPLTLSEREMQEGFSRLREALKGI</sequence>
<keyword id="KW-0028">Amino-acid biosynthesis</keyword>
<keyword id="KW-0032">Aminotransferase</keyword>
<keyword id="KW-0055">Arginine biosynthesis</keyword>
<keyword id="KW-0963">Cytoplasm</keyword>
<keyword id="KW-0663">Pyridoxal phosphate</keyword>
<keyword id="KW-1185">Reference proteome</keyword>
<keyword id="KW-0808">Transferase</keyword>
<protein>
    <recommendedName>
        <fullName evidence="1">Acetylornithine aminotransferase</fullName>
        <shortName evidence="1">ACOAT</shortName>
        <ecNumber evidence="1">2.6.1.11</ecNumber>
    </recommendedName>
</protein>
<organism>
    <name type="scientific">Wolinella succinogenes (strain ATCC 29543 / DSM 1740 / CCUG 13145 / JCM 31913 / LMG 7466 / NCTC 11488 / FDC 602W)</name>
    <name type="common">Vibrio succinogenes</name>
    <dbReference type="NCBI Taxonomy" id="273121"/>
    <lineage>
        <taxon>Bacteria</taxon>
        <taxon>Pseudomonadati</taxon>
        <taxon>Campylobacterota</taxon>
        <taxon>Epsilonproteobacteria</taxon>
        <taxon>Campylobacterales</taxon>
        <taxon>Helicobacteraceae</taxon>
        <taxon>Wolinella</taxon>
    </lineage>
</organism>
<proteinExistence type="inferred from homology"/>
<reference key="1">
    <citation type="journal article" date="2003" name="Proc. Natl. Acad. Sci. U.S.A.">
        <title>Complete genome sequence and analysis of Wolinella succinogenes.</title>
        <authorList>
            <person name="Baar C."/>
            <person name="Eppinger M."/>
            <person name="Raddatz G."/>
            <person name="Simon J."/>
            <person name="Lanz C."/>
            <person name="Klimmek O."/>
            <person name="Nandakumar R."/>
            <person name="Gross R."/>
            <person name="Rosinus A."/>
            <person name="Keller H."/>
            <person name="Jagtap P."/>
            <person name="Linke B."/>
            <person name="Meyer F."/>
            <person name="Lederer H."/>
            <person name="Schuster S.C."/>
        </authorList>
    </citation>
    <scope>NUCLEOTIDE SEQUENCE [LARGE SCALE GENOMIC DNA]</scope>
    <source>
        <strain>ATCC 29543 / DSM 1740 / CCUG 13145 / JCM 31913 / LMG 7466 / NCTC 11488 / FDC 602W</strain>
    </source>
</reference>
<feature type="chain" id="PRO_0000112812" description="Acetylornithine aminotransferase">
    <location>
        <begin position="1"/>
        <end position="393"/>
    </location>
</feature>
<feature type="binding site" evidence="1">
    <location>
        <begin position="102"/>
        <end position="103"/>
    </location>
    <ligand>
        <name>pyridoxal 5'-phosphate</name>
        <dbReference type="ChEBI" id="CHEBI:597326"/>
    </ligand>
</feature>
<feature type="binding site" evidence="1">
    <location>
        <position position="136"/>
    </location>
    <ligand>
        <name>pyridoxal 5'-phosphate</name>
        <dbReference type="ChEBI" id="CHEBI:597326"/>
    </ligand>
</feature>
<feature type="binding site" evidence="1">
    <location>
        <position position="139"/>
    </location>
    <ligand>
        <name>N(2)-acetyl-L-ornithine</name>
        <dbReference type="ChEBI" id="CHEBI:57805"/>
    </ligand>
</feature>
<feature type="binding site" evidence="1">
    <location>
        <begin position="219"/>
        <end position="222"/>
    </location>
    <ligand>
        <name>pyridoxal 5'-phosphate</name>
        <dbReference type="ChEBI" id="CHEBI:597326"/>
    </ligand>
</feature>
<feature type="binding site" evidence="1">
    <location>
        <position position="274"/>
    </location>
    <ligand>
        <name>N(2)-acetyl-L-ornithine</name>
        <dbReference type="ChEBI" id="CHEBI:57805"/>
    </ligand>
</feature>
<feature type="binding site" evidence="1">
    <location>
        <position position="275"/>
    </location>
    <ligand>
        <name>pyridoxal 5'-phosphate</name>
        <dbReference type="ChEBI" id="CHEBI:597326"/>
    </ligand>
</feature>
<feature type="modified residue" description="N6-(pyridoxal phosphate)lysine" evidence="1">
    <location>
        <position position="248"/>
    </location>
</feature>
<name>ARGD_WOLSU</name>